<geneLocation type="mitochondrion"/>
<comment type="function">
    <text>Mitochondrial membrane ATP synthase (F(1)F(0) ATP synthase or Complex V) produces ATP from ADP in the presence of a proton gradient across the membrane which is generated by electron transport complexes of the respiratory chain. F-type ATPases consist of two structural domains, F(1) - containing the extramembraneous catalytic core and F(0) - containing the membrane proton channel, linked together by a central stalk and a peripheral stalk. During catalysis, ATP synthesis in the catalytic domain of F(1) is coupled via a rotary mechanism of the central stalk subunits to proton translocation. Key component of the proton channel; it may play a direct role in the translocation of protons across the membrane.</text>
</comment>
<comment type="subunit">
    <text>F-type ATPases have 2 components, CF(1) - the catalytic core - and CF(0) - the membrane proton channel. CF(1) has five subunits: alpha(3), beta(3), gamma(1), delta(1), epsilon(1). CF(0) has three main subunits: a, b and c.</text>
</comment>
<comment type="subcellular location">
    <subcellularLocation>
        <location>Mitochondrion inner membrane</location>
        <topology>Multi-pass membrane protein</topology>
    </subcellularLocation>
</comment>
<comment type="similarity">
    <text evidence="3">Belongs to the ATPase A chain family.</text>
</comment>
<organism>
    <name type="scientific">Candida parapsilosis</name>
    <name type="common">Yeast</name>
    <dbReference type="NCBI Taxonomy" id="5480"/>
    <lineage>
        <taxon>Eukaryota</taxon>
        <taxon>Fungi</taxon>
        <taxon>Dikarya</taxon>
        <taxon>Ascomycota</taxon>
        <taxon>Saccharomycotina</taxon>
        <taxon>Pichiomycetes</taxon>
        <taxon>Debaryomycetaceae</taxon>
        <taxon>Candida/Lodderomyces clade</taxon>
        <taxon>Candida</taxon>
    </lineage>
</organism>
<feature type="propeptide" id="PRO_0000002610" description="Removed in mature form" evidence="2">
    <location>
        <begin position="1"/>
        <end position="3"/>
    </location>
</feature>
<feature type="chain" id="PRO_0000002611" description="ATP synthase subunit a">
    <location>
        <begin position="4"/>
        <end position="246"/>
    </location>
</feature>
<feature type="transmembrane region" description="Helical" evidence="1">
    <location>
        <begin position="21"/>
        <end position="41"/>
    </location>
</feature>
<feature type="transmembrane region" description="Helical" evidence="1">
    <location>
        <begin position="56"/>
        <end position="76"/>
    </location>
</feature>
<feature type="transmembrane region" description="Helical" evidence="1">
    <location>
        <begin position="82"/>
        <end position="102"/>
    </location>
</feature>
<feature type="transmembrane region" description="Helical" evidence="1">
    <location>
        <begin position="113"/>
        <end position="133"/>
    </location>
</feature>
<feature type="transmembrane region" description="Helical" evidence="1">
    <location>
        <begin position="138"/>
        <end position="158"/>
    </location>
</feature>
<feature type="transmembrane region" description="Helical" evidence="1">
    <location>
        <begin position="184"/>
        <end position="204"/>
    </location>
</feature>
<feature type="transmembrane region" description="Helical" evidence="1">
    <location>
        <begin position="206"/>
        <end position="226"/>
    </location>
</feature>
<feature type="sequence conflict" description="In Ref. 1; CAA39185." evidence="3" ref="1">
    <original>Q</original>
    <variation>P</variation>
    <location>
        <position position="74"/>
    </location>
</feature>
<reference key="1">
    <citation type="journal article" date="1991" name="Eur. J. Biochem.">
        <title>Isolation of the ATP synthase subunit 6 and sequence of the mitochondrial ATP6 gene of the yeast Candida parapsilosis.</title>
        <authorList>
            <person name="Guelin E."/>
            <person name="Guerin M."/>
            <person name="Velours J."/>
        </authorList>
    </citation>
    <scope>NUCLEOTIDE SEQUENCE [GENOMIC DNA]</scope>
    <scope>PROTEIN SEQUENCE OF 4-25</scope>
    <source>
        <strain>CBS 7154 / SP1</strain>
    </source>
</reference>
<reference key="2">
    <citation type="journal article" date="2004" name="Mol. Genet. Genomics">
        <title>Complete DNA sequence of the linear mitochondrial genome of the pathogenic yeast Candida parapsilosis.</title>
        <authorList>
            <person name="Nosek J."/>
            <person name="Novotna M."/>
            <person name="Hlavatovicova Z."/>
            <person name="Ussery D.W."/>
            <person name="Fajkus J."/>
            <person name="Tomaska L."/>
        </authorList>
    </citation>
    <scope>NUCLEOTIDE SEQUENCE [LARGE SCALE GENOMIC DNA]</scope>
    <source>
        <strain>SR23 / CBS 7157</strain>
    </source>
</reference>
<reference key="3">
    <citation type="journal article" date="1995" name="Mol. Gen. Genet.">
        <title>Linear mitochondrial DNAs from yeasts: telomeres with large tandem repetitions.</title>
        <authorList>
            <person name="Nosek J."/>
            <person name="Dinouel N."/>
            <person name="Kovac L."/>
            <person name="Fukuhara H."/>
        </authorList>
    </citation>
    <scope>NUCLEOTIDE SEQUENCE [GENOMIC DNA] OF 228-246</scope>
    <source>
        <strain>SR23 / CBS 7157</strain>
    </source>
</reference>
<evidence type="ECO:0000255" key="1"/>
<evidence type="ECO:0000269" key="2">
    <source>
    </source>
</evidence>
<evidence type="ECO:0000305" key="3"/>
<proteinExistence type="evidence at protein level"/>
<keyword id="KW-0066">ATP synthesis</keyword>
<keyword id="KW-0138">CF(0)</keyword>
<keyword id="KW-0903">Direct protein sequencing</keyword>
<keyword id="KW-0375">Hydrogen ion transport</keyword>
<keyword id="KW-0406">Ion transport</keyword>
<keyword id="KW-0472">Membrane</keyword>
<keyword id="KW-0496">Mitochondrion</keyword>
<keyword id="KW-0999">Mitochondrion inner membrane</keyword>
<keyword id="KW-0812">Transmembrane</keyword>
<keyword id="KW-1133">Transmembrane helix</keyword>
<keyword id="KW-0813">Transport</keyword>
<gene>
    <name type="primary">ATP6</name>
    <name type="synonym">OLI2</name>
</gene>
<accession>Q03671</accession>
<sequence length="246" mass="26980">MFYSPLDQFELKPLLLITDNLTFSITNYTLYLIIVSLIIIFYSSIIRHNYLGSSRWGVSVIAIYDTILNLVNGQIGRKGGYYFPLIFTIFNFILIANLISMIPYSFAISAQLVAVVSFSLTLWIGNVVLGLYLHGWGFFALFVPSGTPLALVPVLVLIEALSYASRAISLGLRLGANILSGHLLMLILGSLIISLMSSSFLGFVSGIIPILAVVAITILEFGIAIIQAYVFSILLSGYIKDSVELH</sequence>
<dbReference type="EMBL" id="X55653">
    <property type="protein sequence ID" value="CAA39185.1"/>
    <property type="molecule type" value="Genomic_DNA"/>
</dbReference>
<dbReference type="EMBL" id="X74411">
    <property type="protein sequence ID" value="CAE54611.1"/>
    <property type="molecule type" value="Genomic_DNA"/>
</dbReference>
<dbReference type="PIR" id="S15378">
    <property type="entry name" value="S15378"/>
</dbReference>
<dbReference type="RefSeq" id="NP_943649.1">
    <property type="nucleotide sequence ID" value="NC_005253.2"/>
</dbReference>
<dbReference type="SMR" id="Q03671"/>
<dbReference type="GeneID" id="2657765"/>
<dbReference type="VEuPathDB" id="FungiDB:CapafMp17"/>
<dbReference type="GO" id="GO:0005743">
    <property type="term" value="C:mitochondrial inner membrane"/>
    <property type="evidence" value="ECO:0007669"/>
    <property type="project" value="UniProtKB-SubCell"/>
</dbReference>
<dbReference type="GO" id="GO:0045259">
    <property type="term" value="C:proton-transporting ATP synthase complex"/>
    <property type="evidence" value="ECO:0007669"/>
    <property type="project" value="UniProtKB-KW"/>
</dbReference>
<dbReference type="GO" id="GO:0046933">
    <property type="term" value="F:proton-transporting ATP synthase activity, rotational mechanism"/>
    <property type="evidence" value="ECO:0007669"/>
    <property type="project" value="EnsemblFungi"/>
</dbReference>
<dbReference type="CDD" id="cd00310">
    <property type="entry name" value="ATP-synt_Fo_a_6"/>
    <property type="match status" value="1"/>
</dbReference>
<dbReference type="FunFam" id="1.20.120.220:FF:000003">
    <property type="entry name" value="ATP synthase subunit a"/>
    <property type="match status" value="1"/>
</dbReference>
<dbReference type="Gene3D" id="1.20.120.220">
    <property type="entry name" value="ATP synthase, F0 complex, subunit A"/>
    <property type="match status" value="1"/>
</dbReference>
<dbReference type="HAMAP" id="MF_01393">
    <property type="entry name" value="ATP_synth_a_bact"/>
    <property type="match status" value="1"/>
</dbReference>
<dbReference type="InterPro" id="IPR000568">
    <property type="entry name" value="ATP_synth_F0_asu"/>
</dbReference>
<dbReference type="InterPro" id="IPR023011">
    <property type="entry name" value="ATP_synth_F0_asu_AS"/>
</dbReference>
<dbReference type="InterPro" id="IPR045083">
    <property type="entry name" value="ATP_synth_F0_asu_bact/mt"/>
</dbReference>
<dbReference type="InterPro" id="IPR035908">
    <property type="entry name" value="F0_ATP_A_sf"/>
</dbReference>
<dbReference type="NCBIfam" id="TIGR01131">
    <property type="entry name" value="ATP_synt_6_or_A"/>
    <property type="match status" value="1"/>
</dbReference>
<dbReference type="PANTHER" id="PTHR11410">
    <property type="entry name" value="ATP SYNTHASE SUBUNIT A"/>
    <property type="match status" value="1"/>
</dbReference>
<dbReference type="PANTHER" id="PTHR11410:SF0">
    <property type="entry name" value="ATP SYNTHASE SUBUNIT A"/>
    <property type="match status" value="1"/>
</dbReference>
<dbReference type="Pfam" id="PF00119">
    <property type="entry name" value="ATP-synt_A"/>
    <property type="match status" value="1"/>
</dbReference>
<dbReference type="PRINTS" id="PR00123">
    <property type="entry name" value="ATPASEA"/>
</dbReference>
<dbReference type="SUPFAM" id="SSF81336">
    <property type="entry name" value="F1F0 ATP synthase subunit A"/>
    <property type="match status" value="1"/>
</dbReference>
<dbReference type="PROSITE" id="PS00449">
    <property type="entry name" value="ATPASE_A"/>
    <property type="match status" value="1"/>
</dbReference>
<name>ATP6_CANPA</name>
<protein>
    <recommendedName>
        <fullName>ATP synthase subunit a</fullName>
    </recommendedName>
    <alternativeName>
        <fullName>ATP synthase subunit 6</fullName>
    </alternativeName>
    <alternativeName>
        <fullName>F-ATPase protein 6</fullName>
    </alternativeName>
</protein>